<keyword id="KW-0560">Oxidoreductase</keyword>
<keyword id="KW-0663">Pyridoxal phosphate</keyword>
<sequence length="957" mass="104553">MTQTLSQLENRDAFIERHIGPDAQQQQEMLKTVGADSLNALIGQIVPQDIQLATPPQVGDATTEFAALAELKAIASRNKRFKSYIGMGYTAVQLPPVIQRNMLENPGWYTAYTPYQPEVSQGRLESLLNFQQVTLDLTGLDIASASLLDEATAAAEAMAMAKRVSKLKSANRFFVAADVHPQTLDVVRTRAETFGFDVIVDDADKVLDHQDVFGVLLQQVGTTGEIHDYSKLIAELKARKVIVSVAADFMALVLLTAPGKQGADIVFGSAQRFGVPMGYGGPHAAFFAAKDEFKRSMPGRIIGVSKDAAGNTALRMAMQTREQHIRREKANSNICTSQVLLANIASLYAVFHGPAGLKRIAGRIHRLTDILADGLQKKGLKLRHAHYFDTLCVEVADKAAVLARAEALQINLRSDIHGAVGITLDEATTREDVLNLFRAIVGDDHGLDIDTLDKDVALDSRSIPAAMLRDDAILTHPVFNRYHSETEMMRYMHALERKDLALNQAMIPLGSCTMKLNAAAEMIPITWPEFAELHPFCPVEQAEGYQQMIAQLSDWLVKLTGYDAVCMQPNSGAQGEYAGLLAIRHYHESRNEGHRDICLIPSSAHGTNPASAQMAGMQVVVVACDKNGNIDLADLREKAEQAGANLSCIMVTYPSTHGVYEETIREVCEIVHQFGGQVYLDGANMNAQVGITSPGFIGADVSHLNLHKTFCIPHGGGGPGMGSIGVKAHLAPFVPGHSVVQIEGMLTRQGAVSAAPFGSASILPISWMYIRMMGAEGLKQASQNAILNANYIATRLKDAYPVLYTGRDGRVAHECILDIRPLKEETGISELDIAKRLIDFGFHAPTMSFPVAGTLMVEPTESESKVELDRFIDAMLAIRAEIDRVKAGEWPLEDNPLVNAPHTQGELVGEWNHPYSRELAVFPAGLHNKYWPTVKRLDDVYGDRNLFCSCVPMSEYQ</sequence>
<organism>
    <name type="scientific">Klebsiella pneumoniae subsp. pneumoniae (strain ATCC 700721 / MGH 78578)</name>
    <dbReference type="NCBI Taxonomy" id="272620"/>
    <lineage>
        <taxon>Bacteria</taxon>
        <taxon>Pseudomonadati</taxon>
        <taxon>Pseudomonadota</taxon>
        <taxon>Gammaproteobacteria</taxon>
        <taxon>Enterobacterales</taxon>
        <taxon>Enterobacteriaceae</taxon>
        <taxon>Klebsiella/Raoultella group</taxon>
        <taxon>Klebsiella</taxon>
        <taxon>Klebsiella pneumoniae complex</taxon>
    </lineage>
</organism>
<proteinExistence type="inferred from homology"/>
<gene>
    <name evidence="1" type="primary">gcvP</name>
    <name type="ordered locus">KPN78578_32750</name>
    <name type="ORF">KPN_03339</name>
</gene>
<feature type="chain" id="PRO_1000045586" description="Glycine dehydrogenase (decarboxylating)">
    <location>
        <begin position="1"/>
        <end position="957"/>
    </location>
</feature>
<feature type="modified residue" description="N6-(pyridoxal phosphate)lysine" evidence="1">
    <location>
        <position position="708"/>
    </location>
</feature>
<accession>A6TDR5</accession>
<comment type="function">
    <text evidence="1">The glycine cleavage system catalyzes the degradation of glycine. The P protein binds the alpha-amino group of glycine through its pyridoxal phosphate cofactor; CO(2) is released and the remaining methylamine moiety is then transferred to the lipoamide cofactor of the H protein.</text>
</comment>
<comment type="catalytic activity">
    <reaction evidence="1">
        <text>N(6)-[(R)-lipoyl]-L-lysyl-[glycine-cleavage complex H protein] + glycine + H(+) = N(6)-[(R)-S(8)-aminomethyldihydrolipoyl]-L-lysyl-[glycine-cleavage complex H protein] + CO2</text>
        <dbReference type="Rhea" id="RHEA:24304"/>
        <dbReference type="Rhea" id="RHEA-COMP:10494"/>
        <dbReference type="Rhea" id="RHEA-COMP:10495"/>
        <dbReference type="ChEBI" id="CHEBI:15378"/>
        <dbReference type="ChEBI" id="CHEBI:16526"/>
        <dbReference type="ChEBI" id="CHEBI:57305"/>
        <dbReference type="ChEBI" id="CHEBI:83099"/>
        <dbReference type="ChEBI" id="CHEBI:83143"/>
        <dbReference type="EC" id="1.4.4.2"/>
    </reaction>
</comment>
<comment type="cofactor">
    <cofactor evidence="1">
        <name>pyridoxal 5'-phosphate</name>
        <dbReference type="ChEBI" id="CHEBI:597326"/>
    </cofactor>
</comment>
<comment type="subunit">
    <text evidence="1">The glycine cleavage system is composed of four proteins: P, T, L and H.</text>
</comment>
<comment type="similarity">
    <text evidence="1">Belongs to the GcvP family.</text>
</comment>
<dbReference type="EC" id="1.4.4.2" evidence="1"/>
<dbReference type="EMBL" id="CP000647">
    <property type="protein sequence ID" value="ABR78736.1"/>
    <property type="molecule type" value="Genomic_DNA"/>
</dbReference>
<dbReference type="RefSeq" id="WP_015958957.1">
    <property type="nucleotide sequence ID" value="NC_009648.1"/>
</dbReference>
<dbReference type="SMR" id="A6TDR5"/>
<dbReference type="STRING" id="272620.KPN_03339"/>
<dbReference type="jPOST" id="A6TDR5"/>
<dbReference type="PaxDb" id="272620-KPN_03339"/>
<dbReference type="EnsemblBacteria" id="ABR78736">
    <property type="protein sequence ID" value="ABR78736"/>
    <property type="gene ID" value="KPN_03339"/>
</dbReference>
<dbReference type="KEGG" id="kpn:KPN_03339"/>
<dbReference type="HOGENOM" id="CLU_004620_1_1_6"/>
<dbReference type="Proteomes" id="UP000000265">
    <property type="component" value="Chromosome"/>
</dbReference>
<dbReference type="GO" id="GO:0005829">
    <property type="term" value="C:cytosol"/>
    <property type="evidence" value="ECO:0007669"/>
    <property type="project" value="TreeGrafter"/>
</dbReference>
<dbReference type="GO" id="GO:0005960">
    <property type="term" value="C:glycine cleavage complex"/>
    <property type="evidence" value="ECO:0007669"/>
    <property type="project" value="TreeGrafter"/>
</dbReference>
<dbReference type="GO" id="GO:0016594">
    <property type="term" value="F:glycine binding"/>
    <property type="evidence" value="ECO:0007669"/>
    <property type="project" value="TreeGrafter"/>
</dbReference>
<dbReference type="GO" id="GO:0004375">
    <property type="term" value="F:glycine dehydrogenase (decarboxylating) activity"/>
    <property type="evidence" value="ECO:0007669"/>
    <property type="project" value="UniProtKB-EC"/>
</dbReference>
<dbReference type="GO" id="GO:0030170">
    <property type="term" value="F:pyridoxal phosphate binding"/>
    <property type="evidence" value="ECO:0007669"/>
    <property type="project" value="TreeGrafter"/>
</dbReference>
<dbReference type="GO" id="GO:0019464">
    <property type="term" value="P:glycine decarboxylation via glycine cleavage system"/>
    <property type="evidence" value="ECO:0007669"/>
    <property type="project" value="UniProtKB-UniRule"/>
</dbReference>
<dbReference type="CDD" id="cd00613">
    <property type="entry name" value="GDC-P"/>
    <property type="match status" value="2"/>
</dbReference>
<dbReference type="FunFam" id="3.40.640.10:FF:000005">
    <property type="entry name" value="Glycine dehydrogenase (decarboxylating), mitochondrial"/>
    <property type="match status" value="1"/>
</dbReference>
<dbReference type="FunFam" id="3.90.1150.10:FF:000007">
    <property type="entry name" value="Glycine dehydrogenase (decarboxylating), mitochondrial"/>
    <property type="match status" value="1"/>
</dbReference>
<dbReference type="FunFam" id="3.40.640.10:FF:000007">
    <property type="entry name" value="glycine dehydrogenase (Decarboxylating), mitochondrial"/>
    <property type="match status" value="1"/>
</dbReference>
<dbReference type="Gene3D" id="3.90.1150.10">
    <property type="entry name" value="Aspartate Aminotransferase, domain 1"/>
    <property type="match status" value="1"/>
</dbReference>
<dbReference type="Gene3D" id="3.40.640.10">
    <property type="entry name" value="Type I PLP-dependent aspartate aminotransferase-like (Major domain)"/>
    <property type="match status" value="2"/>
</dbReference>
<dbReference type="HAMAP" id="MF_00711">
    <property type="entry name" value="GcvP"/>
    <property type="match status" value="1"/>
</dbReference>
<dbReference type="InterPro" id="IPR003437">
    <property type="entry name" value="GcvP"/>
</dbReference>
<dbReference type="InterPro" id="IPR049316">
    <property type="entry name" value="GDC-P_C"/>
</dbReference>
<dbReference type="InterPro" id="IPR049315">
    <property type="entry name" value="GDC-P_N"/>
</dbReference>
<dbReference type="InterPro" id="IPR020581">
    <property type="entry name" value="GDC_P"/>
</dbReference>
<dbReference type="InterPro" id="IPR015424">
    <property type="entry name" value="PyrdxlP-dep_Trfase"/>
</dbReference>
<dbReference type="InterPro" id="IPR015421">
    <property type="entry name" value="PyrdxlP-dep_Trfase_major"/>
</dbReference>
<dbReference type="InterPro" id="IPR015422">
    <property type="entry name" value="PyrdxlP-dep_Trfase_small"/>
</dbReference>
<dbReference type="NCBIfam" id="TIGR00461">
    <property type="entry name" value="gcvP"/>
    <property type="match status" value="1"/>
</dbReference>
<dbReference type="NCBIfam" id="NF003346">
    <property type="entry name" value="PRK04366.1"/>
    <property type="match status" value="1"/>
</dbReference>
<dbReference type="PANTHER" id="PTHR11773:SF13">
    <property type="entry name" value="GLYCINE DEHYDROGENASE (DECARBOXYLATING)"/>
    <property type="match status" value="1"/>
</dbReference>
<dbReference type="PANTHER" id="PTHR11773">
    <property type="entry name" value="GLYCINE DEHYDROGENASE, DECARBOXYLATING"/>
    <property type="match status" value="1"/>
</dbReference>
<dbReference type="Pfam" id="PF21478">
    <property type="entry name" value="GcvP2_C"/>
    <property type="match status" value="1"/>
</dbReference>
<dbReference type="Pfam" id="PF02347">
    <property type="entry name" value="GDC-P"/>
    <property type="match status" value="2"/>
</dbReference>
<dbReference type="SUPFAM" id="SSF53383">
    <property type="entry name" value="PLP-dependent transferases"/>
    <property type="match status" value="2"/>
</dbReference>
<protein>
    <recommendedName>
        <fullName evidence="1">Glycine dehydrogenase (decarboxylating)</fullName>
        <ecNumber evidence="1">1.4.4.2</ecNumber>
    </recommendedName>
    <alternativeName>
        <fullName evidence="1">Glycine cleavage system P-protein</fullName>
    </alternativeName>
    <alternativeName>
        <fullName evidence="1">Glycine decarboxylase</fullName>
    </alternativeName>
    <alternativeName>
        <fullName evidence="1">Glycine dehydrogenase (aminomethyl-transferring)</fullName>
    </alternativeName>
</protein>
<evidence type="ECO:0000255" key="1">
    <source>
        <dbReference type="HAMAP-Rule" id="MF_00711"/>
    </source>
</evidence>
<reference key="1">
    <citation type="submission" date="2006-09" db="EMBL/GenBank/DDBJ databases">
        <authorList>
            <consortium name="The Klebsiella pneumonia Genome Sequencing Project"/>
            <person name="McClelland M."/>
            <person name="Sanderson E.K."/>
            <person name="Spieth J."/>
            <person name="Clifton W.S."/>
            <person name="Latreille P."/>
            <person name="Sabo A."/>
            <person name="Pepin K."/>
            <person name="Bhonagiri V."/>
            <person name="Porwollik S."/>
            <person name="Ali J."/>
            <person name="Wilson R.K."/>
        </authorList>
    </citation>
    <scope>NUCLEOTIDE SEQUENCE [LARGE SCALE GENOMIC DNA]</scope>
    <source>
        <strain>ATCC 700721 / MGH 78578</strain>
    </source>
</reference>
<name>GCSP_KLEP7</name>